<gene>
    <name evidence="18" type="primary">ELAPOR1</name>
    <name evidence="14" type="synonym">EIG121</name>
    <name evidence="17" type="synonym">KIAA1324</name>
    <name evidence="16" type="ORF">UNQ2426/PRO4985</name>
</gene>
<reference key="1">
    <citation type="journal article" date="2003" name="Genome Res.">
        <title>The secreted protein discovery initiative (SPDI), a large-scale effort to identify novel human secreted and transmembrane proteins: a bioinformatics assessment.</title>
        <authorList>
            <person name="Clark H.F."/>
            <person name="Gurney A.L."/>
            <person name="Abaya E."/>
            <person name="Baker K."/>
            <person name="Baldwin D.T."/>
            <person name="Brush J."/>
            <person name="Chen J."/>
            <person name="Chow B."/>
            <person name="Chui C."/>
            <person name="Crowley C."/>
            <person name="Currell B."/>
            <person name="Deuel B."/>
            <person name="Dowd P."/>
            <person name="Eaton D."/>
            <person name="Foster J.S."/>
            <person name="Grimaldi C."/>
            <person name="Gu Q."/>
            <person name="Hass P.E."/>
            <person name="Heldens S."/>
            <person name="Huang A."/>
            <person name="Kim H.S."/>
            <person name="Klimowski L."/>
            <person name="Jin Y."/>
            <person name="Johnson S."/>
            <person name="Lee J."/>
            <person name="Lewis L."/>
            <person name="Liao D."/>
            <person name="Mark M.R."/>
            <person name="Robbie E."/>
            <person name="Sanchez C."/>
            <person name="Schoenfeld J."/>
            <person name="Seshagiri S."/>
            <person name="Simmons L."/>
            <person name="Singh J."/>
            <person name="Smith V."/>
            <person name="Stinson J."/>
            <person name="Vagts A."/>
            <person name="Vandlen R.L."/>
            <person name="Watanabe C."/>
            <person name="Wieand D."/>
            <person name="Woods K."/>
            <person name="Xie M.-H."/>
            <person name="Yansura D.G."/>
            <person name="Yi S."/>
            <person name="Yu G."/>
            <person name="Yuan J."/>
            <person name="Zhang M."/>
            <person name="Zhang Z."/>
            <person name="Goddard A.D."/>
            <person name="Wood W.I."/>
            <person name="Godowski P.J."/>
            <person name="Gray A.M."/>
        </authorList>
    </citation>
    <scope>NUCLEOTIDE SEQUENCE [LARGE SCALE MRNA] (ISOFORM 2)</scope>
    <scope>VARIANTS VAL-86 AND PRO-623</scope>
</reference>
<reference key="2">
    <citation type="journal article" date="2006" name="Nature">
        <title>The DNA sequence and biological annotation of human chromosome 1.</title>
        <authorList>
            <person name="Gregory S.G."/>
            <person name="Barlow K.F."/>
            <person name="McLay K.E."/>
            <person name="Kaul R."/>
            <person name="Swarbreck D."/>
            <person name="Dunham A."/>
            <person name="Scott C.E."/>
            <person name="Howe K.L."/>
            <person name="Woodfine K."/>
            <person name="Spencer C.C.A."/>
            <person name="Jones M.C."/>
            <person name="Gillson C."/>
            <person name="Searle S."/>
            <person name="Zhou Y."/>
            <person name="Kokocinski F."/>
            <person name="McDonald L."/>
            <person name="Evans R."/>
            <person name="Phillips K."/>
            <person name="Atkinson A."/>
            <person name="Cooper R."/>
            <person name="Jones C."/>
            <person name="Hall R.E."/>
            <person name="Andrews T.D."/>
            <person name="Lloyd C."/>
            <person name="Ainscough R."/>
            <person name="Almeida J.P."/>
            <person name="Ambrose K.D."/>
            <person name="Anderson F."/>
            <person name="Andrew R.W."/>
            <person name="Ashwell R.I.S."/>
            <person name="Aubin K."/>
            <person name="Babbage A.K."/>
            <person name="Bagguley C.L."/>
            <person name="Bailey J."/>
            <person name="Beasley H."/>
            <person name="Bethel G."/>
            <person name="Bird C.P."/>
            <person name="Bray-Allen S."/>
            <person name="Brown J.Y."/>
            <person name="Brown A.J."/>
            <person name="Buckley D."/>
            <person name="Burton J."/>
            <person name="Bye J."/>
            <person name="Carder C."/>
            <person name="Chapman J.C."/>
            <person name="Clark S.Y."/>
            <person name="Clarke G."/>
            <person name="Clee C."/>
            <person name="Cobley V."/>
            <person name="Collier R.E."/>
            <person name="Corby N."/>
            <person name="Coville G.J."/>
            <person name="Davies J."/>
            <person name="Deadman R."/>
            <person name="Dunn M."/>
            <person name="Earthrowl M."/>
            <person name="Ellington A.G."/>
            <person name="Errington H."/>
            <person name="Frankish A."/>
            <person name="Frankland J."/>
            <person name="French L."/>
            <person name="Garner P."/>
            <person name="Garnett J."/>
            <person name="Gay L."/>
            <person name="Ghori M.R.J."/>
            <person name="Gibson R."/>
            <person name="Gilby L.M."/>
            <person name="Gillett W."/>
            <person name="Glithero R.J."/>
            <person name="Grafham D.V."/>
            <person name="Griffiths C."/>
            <person name="Griffiths-Jones S."/>
            <person name="Grocock R."/>
            <person name="Hammond S."/>
            <person name="Harrison E.S.I."/>
            <person name="Hart E."/>
            <person name="Haugen E."/>
            <person name="Heath P.D."/>
            <person name="Holmes S."/>
            <person name="Holt K."/>
            <person name="Howden P.J."/>
            <person name="Hunt A.R."/>
            <person name="Hunt S.E."/>
            <person name="Hunter G."/>
            <person name="Isherwood J."/>
            <person name="James R."/>
            <person name="Johnson C."/>
            <person name="Johnson D."/>
            <person name="Joy A."/>
            <person name="Kay M."/>
            <person name="Kershaw J.K."/>
            <person name="Kibukawa M."/>
            <person name="Kimberley A.M."/>
            <person name="King A."/>
            <person name="Knights A.J."/>
            <person name="Lad H."/>
            <person name="Laird G."/>
            <person name="Lawlor S."/>
            <person name="Leongamornlert D.A."/>
            <person name="Lloyd D.M."/>
            <person name="Loveland J."/>
            <person name="Lovell J."/>
            <person name="Lush M.J."/>
            <person name="Lyne R."/>
            <person name="Martin S."/>
            <person name="Mashreghi-Mohammadi M."/>
            <person name="Matthews L."/>
            <person name="Matthews N.S.W."/>
            <person name="McLaren S."/>
            <person name="Milne S."/>
            <person name="Mistry S."/>
            <person name="Moore M.J.F."/>
            <person name="Nickerson T."/>
            <person name="O'Dell C.N."/>
            <person name="Oliver K."/>
            <person name="Palmeiri A."/>
            <person name="Palmer S.A."/>
            <person name="Parker A."/>
            <person name="Patel D."/>
            <person name="Pearce A.V."/>
            <person name="Peck A.I."/>
            <person name="Pelan S."/>
            <person name="Phelps K."/>
            <person name="Phillimore B.J."/>
            <person name="Plumb R."/>
            <person name="Rajan J."/>
            <person name="Raymond C."/>
            <person name="Rouse G."/>
            <person name="Saenphimmachak C."/>
            <person name="Sehra H.K."/>
            <person name="Sheridan E."/>
            <person name="Shownkeen R."/>
            <person name="Sims S."/>
            <person name="Skuce C.D."/>
            <person name="Smith M."/>
            <person name="Steward C."/>
            <person name="Subramanian S."/>
            <person name="Sycamore N."/>
            <person name="Tracey A."/>
            <person name="Tromans A."/>
            <person name="Van Helmond Z."/>
            <person name="Wall M."/>
            <person name="Wallis J.M."/>
            <person name="White S."/>
            <person name="Whitehead S.L."/>
            <person name="Wilkinson J.E."/>
            <person name="Willey D.L."/>
            <person name="Williams H."/>
            <person name="Wilming L."/>
            <person name="Wray P.W."/>
            <person name="Wu Z."/>
            <person name="Coulson A."/>
            <person name="Vaudin M."/>
            <person name="Sulston J.E."/>
            <person name="Durbin R.M."/>
            <person name="Hubbard T."/>
            <person name="Wooster R."/>
            <person name="Dunham I."/>
            <person name="Carter N.P."/>
            <person name="McVean G."/>
            <person name="Ross M.T."/>
            <person name="Harrow J."/>
            <person name="Olson M.V."/>
            <person name="Beck S."/>
            <person name="Rogers J."/>
            <person name="Bentley D.R."/>
        </authorList>
    </citation>
    <scope>NUCLEOTIDE SEQUENCE [LARGE SCALE GENOMIC DNA]</scope>
</reference>
<reference key="3">
    <citation type="journal article" date="2004" name="Genome Res.">
        <title>The status, quality, and expansion of the NIH full-length cDNA project: the Mammalian Gene Collection (MGC).</title>
        <authorList>
            <consortium name="The MGC Project Team"/>
        </authorList>
    </citation>
    <scope>NUCLEOTIDE SEQUENCE [LARGE SCALE MRNA] (ISOFORM 3)</scope>
    <scope>VARIANTS VAL-86 AND PRO-623 AND PRO-1009</scope>
</reference>
<reference key="4">
    <citation type="journal article" date="2000" name="DNA Res.">
        <title>Prediction of the coding sequences of unidentified human genes. XVI. The complete sequences of 150 new cDNA clones from brain which code for large proteins in vitro.</title>
        <authorList>
            <person name="Nagase T."/>
            <person name="Kikuno R."/>
            <person name="Ishikawa K."/>
            <person name="Hirosawa M."/>
            <person name="Ohara O."/>
        </authorList>
    </citation>
    <scope>NUCLEOTIDE SEQUENCE [LARGE SCALE MRNA] OF 425-1013 (ISOFORM 4)</scope>
    <scope>VARIANT PRO-623</scope>
    <source>
        <tissue>Brain</tissue>
    </source>
</reference>
<reference key="5">
    <citation type="journal article" date="2005" name="Clin. Cancer Res.">
        <title>Identification of a novel estrogen-regulated gene, EIG121, induced by hormone replacement therapy and differentially expressed in type I and type II endometrial cancer.</title>
        <authorList>
            <person name="Deng L."/>
            <person name="Broaddus R.R."/>
            <person name="McCampbell A."/>
            <person name="Shipley G.L."/>
            <person name="Loose D.S."/>
            <person name="Stancel G.M."/>
            <person name="Pickar J.H."/>
            <person name="Davies P.J.A."/>
        </authorList>
    </citation>
    <scope>IDENTIFICATION</scope>
    <scope>INDUCTION</scope>
    <scope>TISSUE SPECIFICITY</scope>
    <source>
        <tissue>Endometrium</tissue>
    </source>
</reference>
<reference key="6">
    <citation type="journal article" date="2010" name="Cell Death Dis.">
        <title>The novel estrogen-induced gene EIG121 regulates autophagy and promotes cell survival under stress.</title>
        <authorList>
            <person name="Deng L."/>
            <person name="Feng J."/>
            <person name="Broaddus R.R."/>
        </authorList>
    </citation>
    <scope>FUNCTION</scope>
    <scope>SUBCELLULAR LOCATION</scope>
</reference>
<reference key="7">
    <citation type="journal article" date="2015" name="Cancer Res.">
        <title>KIAA1324 Suppresses Gastric Cancer Progression by Inhibiting the Oncoprotein GRP78.</title>
        <authorList>
            <person name="Kang J.M."/>
            <person name="Park S."/>
            <person name="Kim S.J."/>
            <person name="Kim H."/>
            <person name="Lee B."/>
            <person name="Kim J."/>
            <person name="Park J."/>
            <person name="Kim S.T."/>
            <person name="Yang H.K."/>
            <person name="Kim W.H."/>
            <person name="Kim S.J."/>
        </authorList>
    </citation>
    <scope>FUNCTION</scope>
    <scope>INTERACTION WITH HSPA5</scope>
    <scope>SUBCELLULAR LOCATION</scope>
</reference>
<reference key="8">
    <citation type="journal article" date="2006" name="Science">
        <title>The consensus coding sequences of human breast and colorectal cancers.</title>
        <authorList>
            <person name="Sjoeblom T."/>
            <person name="Jones S."/>
            <person name="Wood L.D."/>
            <person name="Parsons D.W."/>
            <person name="Lin J."/>
            <person name="Barber T.D."/>
            <person name="Mandelker D."/>
            <person name="Leary R.J."/>
            <person name="Ptak J."/>
            <person name="Silliman N."/>
            <person name="Szabo S."/>
            <person name="Buckhaults P."/>
            <person name="Farrell C."/>
            <person name="Meeh P."/>
            <person name="Markowitz S.D."/>
            <person name="Willis J."/>
            <person name="Dawson D."/>
            <person name="Willson J.K.V."/>
            <person name="Gazdar A.F."/>
            <person name="Hartigan J."/>
            <person name="Wu L."/>
            <person name="Liu C."/>
            <person name="Parmigiani G."/>
            <person name="Park B.H."/>
            <person name="Bachman K.E."/>
            <person name="Papadopoulos N."/>
            <person name="Vogelstein B."/>
            <person name="Kinzler K.W."/>
            <person name="Velculescu V.E."/>
        </authorList>
    </citation>
    <scope>VARIANT [LARGE SCALE ANALYSIS] ARG-829</scope>
</reference>
<evidence type="ECO:0000250" key="1"/>
<evidence type="ECO:0000255" key="2"/>
<evidence type="ECO:0000255" key="3">
    <source>
        <dbReference type="PROSITE-ProRule" id="PRU01262"/>
    </source>
</evidence>
<evidence type="ECO:0000269" key="4">
    <source>
    </source>
</evidence>
<evidence type="ECO:0000269" key="5">
    <source>
    </source>
</evidence>
<evidence type="ECO:0000269" key="6">
    <source>
    </source>
</evidence>
<evidence type="ECO:0000269" key="7">
    <source>
    </source>
</evidence>
<evidence type="ECO:0000269" key="8">
    <source>
    </source>
</evidence>
<evidence type="ECO:0000269" key="9">
    <source>
    </source>
</evidence>
<evidence type="ECO:0000269" key="10">
    <source>
    </source>
</evidence>
<evidence type="ECO:0000303" key="11">
    <source>
    </source>
</evidence>
<evidence type="ECO:0000303" key="12">
    <source>
    </source>
</evidence>
<evidence type="ECO:0000303" key="13">
    <source>
    </source>
</evidence>
<evidence type="ECO:0000303" key="14">
    <source>
    </source>
</evidence>
<evidence type="ECO:0000305" key="15"/>
<evidence type="ECO:0000312" key="16">
    <source>
        <dbReference type="EMBL" id="AAQ88732.1"/>
    </source>
</evidence>
<evidence type="ECO:0000312" key="17">
    <source>
        <dbReference type="EMBL" id="BAA92562.1"/>
    </source>
</evidence>
<evidence type="ECO:0000312" key="18">
    <source>
        <dbReference type="HGNC" id="HGNC:29618"/>
    </source>
</evidence>
<sequence>MAEPGHSHHLSARVRGRTERRIPRLWRLLLWAGTAFQVTQGTGPELHACKESEYHYEYTACDSTGSRWRVAVPHTPGLCTSLPDPIKGTECSFSCNAGEFLDMKDQSCKPCAEGRYSLGTGIRFDEWDELPHGFASLSANMELDDSAAESTGNCTSSKWVPRGDYIASNTDECTATLMYAVNLKQSGTVNFEYYYPDSSIIFEFFVQNDQCQPNADDSRWMKTTEKGWEFHSVELNRGNNVLYWRTTAFSVWTKVPKPVLVRNIAITGVAYTSECFPCKPGTYADKQGSSFCKLCPANSYSNKGETSCHQCDPDKYSEKGSSSCNVRPACTDKDYFYTHTACDANGETQLMYKWAKPKICSEDLEGAVKLPASGVKTHCPPCNPGFFKTNNSTCQPCPYGSYSNGSDCTRCPAGTEPAVGFEYKWWNTLPTNMETTVLSGINFEYKGMTGWEVAGDHIYTAAGASDNDFMILTLVVPGFRPPQSVMADTENKEVARITFVFETLCSVNCELYFMVGVNSRTNTPVETWKGSKGKQSYTYIIEENTTTSFTWAFQRTTFHEASRKYTNDVAKIYSINVTNVMNGVASYCRPCALEASDVGSSCTSCPAGYYIDRDSGTCHSCPTNTILKAHQPYGVQACVPCGPGTKNNKIHSLCYNDCTFSRNTPTRTFNYNFSALANTVTLAGGPSFTSKGLKYFHHFTLSLCGNQGRKMSVCTDNVTDLRIPEGESGFSKSITAYVCQAVIIPPEVTGYKAGVSSQPVSLADRLIGVTTDMTLDGITSPAELFHLESLGIPDVIFFYRSNDVTQSCSSGRSTTIRVRCSPQKTVPGSLLLPGTCSDGTCDGCNFHFLWESAAACPLCSVADYHAIVSSCVAGIQKTTYVWREPKLCSGGISLPEQRVTICKTIDFWLKVGISAGTCTAILLTVLTCYFWKKNQKLEYKYSKLVMNATLKDCDLPAADSCAIMEGEDVEDDLIFTSKKSLFGKIKSFTSKRTPDGFDSVPLKTSSGGLDMDL</sequence>
<comment type="function">
    <text evidence="9 10">May protect cells from cell death by inducing cytosolic vacuolization and up-regulating the autophagy pathway (PubMed:21072319). May play a role in apoptosis and cell proliferation through its interaction with HSPA5 (PubMed:26045166).</text>
</comment>
<comment type="subunit">
    <text evidence="10">Interacts with HSPA5; may regulate the function of HSPA5 in apoptosis and cell proliferation.</text>
</comment>
<comment type="interaction">
    <interactant intactId="EBI-12920100">
        <id>Q6UXG2-3</id>
    </interactant>
    <interactant intactId="EBI-25837549">
        <id>P28329-3</id>
        <label>CHAT</label>
    </interactant>
    <organismsDiffer>false</organismsDiffer>
    <experiments>3</experiments>
</comment>
<comment type="interaction">
    <interactant intactId="EBI-12920100">
        <id>Q6UXG2-3</id>
    </interactant>
    <interactant intactId="EBI-372594">
        <id>Q99828</id>
        <label>CIB1</label>
    </interactant>
    <organismsDiffer>false</organismsDiffer>
    <experiments>3</experiments>
</comment>
<comment type="interaction">
    <interactant intactId="EBI-12920100">
        <id>Q6UXG2-3</id>
    </interactant>
    <interactant intactId="EBI-348399">
        <id>P22607</id>
        <label>FGFR3</label>
    </interactant>
    <organismsDiffer>false</organismsDiffer>
    <experiments>3</experiments>
</comment>
<comment type="interaction">
    <interactant intactId="EBI-12920100">
        <id>Q6UXG2-3</id>
    </interactant>
    <interactant intactId="EBI-744302">
        <id>P14136</id>
        <label>GFAP</label>
    </interactant>
    <organismsDiffer>false</organismsDiffer>
    <experiments>3</experiments>
</comment>
<comment type="interaction">
    <interactant intactId="EBI-12920100">
        <id>Q6UXG2-3</id>
    </interactant>
    <interactant intactId="EBI-747754">
        <id>P28799</id>
        <label>GRN</label>
    </interactant>
    <organismsDiffer>false</organismsDiffer>
    <experiments>3</experiments>
</comment>
<comment type="interaction">
    <interactant intactId="EBI-12920100">
        <id>Q6UXG2-3</id>
    </interactant>
    <interactant intactId="EBI-352682">
        <id>P04792</id>
        <label>HSPB1</label>
    </interactant>
    <organismsDiffer>false</organismsDiffer>
    <experiments>3</experiments>
</comment>
<comment type="interaction">
    <interactant intactId="EBI-12920100">
        <id>Q6UXG2-3</id>
    </interactant>
    <interactant intactId="EBI-1055254">
        <id>Q8WXH2</id>
        <label>JPH3</label>
    </interactant>
    <organismsDiffer>false</organismsDiffer>
    <experiments>3</experiments>
</comment>
<comment type="interaction">
    <interactant intactId="EBI-12920100">
        <id>Q6UXG2-3</id>
    </interactant>
    <interactant intactId="EBI-475646">
        <id>P07196</id>
        <label>NEFL</label>
    </interactant>
    <organismsDiffer>false</organismsDiffer>
    <experiments>3</experiments>
</comment>
<comment type="interaction">
    <interactant intactId="EBI-12920100">
        <id>Q6UXG2-3</id>
    </interactant>
    <interactant intactId="EBI-25900580">
        <id>Q9Y649</id>
    </interactant>
    <organismsDiffer>false</organismsDiffer>
    <experiments>3</experiments>
</comment>
<comment type="subcellular location">
    <subcellularLocation>
        <location evidence="9 10">Cell membrane</location>
        <topology evidence="9">Single-pass type I membrane protein</topology>
    </subcellularLocation>
    <subcellularLocation>
        <location evidence="9">Late endosome membrane</location>
        <topology evidence="9">Single-pass type I membrane protein</topology>
    </subcellularLocation>
    <subcellularLocation>
        <location evidence="9">Golgi apparatus</location>
        <location evidence="9">trans-Golgi network membrane</location>
        <topology evidence="9">Single-pass type I membrane protein</topology>
    </subcellularLocation>
    <subcellularLocation>
        <location evidence="9">Lysosome membrane</location>
        <topology evidence="9">Single-pass membrane protein</topology>
    </subcellularLocation>
    <subcellularLocation>
        <location evidence="10">Endoplasmic reticulum membrane</location>
        <topology evidence="9">Single-pass type I membrane protein</topology>
    </subcellularLocation>
</comment>
<comment type="alternative products">
    <event type="alternative splicing"/>
    <isoform>
        <id>Q6UXG2-1</id>
        <name>1</name>
        <sequence type="displayed"/>
    </isoform>
    <isoform>
        <id>Q6UXG2-2</id>
        <name>2</name>
        <sequence type="described" ref="VSP_025116"/>
    </isoform>
    <isoform>
        <id>Q6UXG2-3</id>
        <name>3</name>
        <sequence type="described" ref="VSP_025115"/>
    </isoform>
    <isoform>
        <id>Q6UXG2-4</id>
        <name>4</name>
        <sequence type="described" ref="VSP_025117"/>
    </isoform>
</comment>
<comment type="tissue specificity">
    <text evidence="7">Expressed in normal endometrium but overexpressed in endometroid tumors.</text>
</comment>
<comment type="induction">
    <text evidence="7">By estrogen replacement therapy.</text>
</comment>
<comment type="similarity">
    <text evidence="15">Belongs to the ELAPOR family.</text>
</comment>
<keyword id="KW-0025">Alternative splicing</keyword>
<keyword id="KW-0072">Autophagy</keyword>
<keyword id="KW-1003">Cell membrane</keyword>
<keyword id="KW-1015">Disulfide bond</keyword>
<keyword id="KW-0256">Endoplasmic reticulum</keyword>
<keyword id="KW-0967">Endosome</keyword>
<keyword id="KW-0325">Glycoprotein</keyword>
<keyword id="KW-0333">Golgi apparatus</keyword>
<keyword id="KW-0458">Lysosome</keyword>
<keyword id="KW-0472">Membrane</keyword>
<keyword id="KW-1267">Proteomics identification</keyword>
<keyword id="KW-1185">Reference proteome</keyword>
<keyword id="KW-0732">Signal</keyword>
<keyword id="KW-0812">Transmembrane</keyword>
<keyword id="KW-1133">Transmembrane helix</keyword>
<dbReference type="EMBL" id="AY358366">
    <property type="protein sequence ID" value="AAQ88732.1"/>
    <property type="molecule type" value="mRNA"/>
</dbReference>
<dbReference type="EMBL" id="AL138933">
    <property type="status" value="NOT_ANNOTATED_CDS"/>
    <property type="molecule type" value="Genomic_DNA"/>
</dbReference>
<dbReference type="EMBL" id="AL356389">
    <property type="status" value="NOT_ANNOTATED_CDS"/>
    <property type="molecule type" value="Genomic_DNA"/>
</dbReference>
<dbReference type="EMBL" id="BC125208">
    <property type="protein sequence ID" value="AAI25209.1"/>
    <property type="molecule type" value="mRNA"/>
</dbReference>
<dbReference type="EMBL" id="AB037745">
    <property type="protein sequence ID" value="BAA92562.1"/>
    <property type="molecule type" value="mRNA"/>
</dbReference>
<dbReference type="CCDS" id="CCDS58015.1">
    <molecule id="Q6UXG2-3"/>
</dbReference>
<dbReference type="CCDS" id="CCDS794.1">
    <molecule id="Q6UXG2-1"/>
</dbReference>
<dbReference type="RefSeq" id="NP_001253977.2">
    <molecule id="Q6UXG2-3"/>
    <property type="nucleotide sequence ID" value="NM_001267048.2"/>
</dbReference>
<dbReference type="RefSeq" id="NP_065826.2">
    <molecule id="Q6UXG2-1"/>
    <property type="nucleotide sequence ID" value="NM_020775.4"/>
</dbReference>
<dbReference type="RefSeq" id="XP_011540127.1">
    <molecule id="Q6UXG2-4"/>
    <property type="nucleotide sequence ID" value="XM_011541825.3"/>
</dbReference>
<dbReference type="BioGRID" id="121594">
    <property type="interactions" value="64"/>
</dbReference>
<dbReference type="FunCoup" id="Q6UXG2">
    <property type="interactions" value="265"/>
</dbReference>
<dbReference type="IntAct" id="Q6UXG2">
    <property type="interactions" value="19"/>
</dbReference>
<dbReference type="STRING" id="9606.ENSP00000358955"/>
<dbReference type="GlyConnect" id="1884">
    <property type="glycosylation" value="12 N-Linked glycans (3 sites)"/>
</dbReference>
<dbReference type="GlyCosmos" id="Q6UXG2">
    <property type="glycosylation" value="5 sites, 12 glycans"/>
</dbReference>
<dbReference type="GlyGen" id="Q6UXG2">
    <property type="glycosylation" value="8 sites, 12 N-linked glycans (3 sites)"/>
</dbReference>
<dbReference type="iPTMnet" id="Q6UXG2"/>
<dbReference type="PhosphoSitePlus" id="Q6UXG2"/>
<dbReference type="BioMuta" id="KIAA1324"/>
<dbReference type="DMDM" id="147647000"/>
<dbReference type="jPOST" id="Q6UXG2"/>
<dbReference type="MassIVE" id="Q6UXG2"/>
<dbReference type="PaxDb" id="9606-ENSP00000358955"/>
<dbReference type="PeptideAtlas" id="Q6UXG2"/>
<dbReference type="ProteomicsDB" id="67605">
    <molecule id="Q6UXG2-1"/>
</dbReference>
<dbReference type="ProteomicsDB" id="67606">
    <molecule id="Q6UXG2-2"/>
</dbReference>
<dbReference type="ProteomicsDB" id="67607">
    <molecule id="Q6UXG2-3"/>
</dbReference>
<dbReference type="ProteomicsDB" id="67608">
    <molecule id="Q6UXG2-4"/>
</dbReference>
<dbReference type="Antibodypedia" id="33748">
    <property type="antibodies" value="175 antibodies from 26 providers"/>
</dbReference>
<dbReference type="DNASU" id="57535"/>
<dbReference type="Ensembl" id="ENST00000369939.8">
    <molecule id="Q6UXG2-1"/>
    <property type="protein sequence ID" value="ENSP00000358955.3"/>
    <property type="gene ID" value="ENSG00000116299.17"/>
</dbReference>
<dbReference type="Ensembl" id="ENST00000529753.5">
    <molecule id="Q6UXG2-3"/>
    <property type="protein sequence ID" value="ENSP00000434595.1"/>
    <property type="gene ID" value="ENSG00000116299.17"/>
</dbReference>
<dbReference type="GeneID" id="57535"/>
<dbReference type="KEGG" id="hsa:57535"/>
<dbReference type="MANE-Select" id="ENST00000369939.8">
    <property type="protein sequence ID" value="ENSP00000358955.3"/>
    <property type="RefSeq nucleotide sequence ID" value="NM_020775.5"/>
    <property type="RefSeq protein sequence ID" value="NP_065826.3"/>
</dbReference>
<dbReference type="UCSC" id="uc009wey.4">
    <molecule id="Q6UXG2-1"/>
    <property type="organism name" value="human"/>
</dbReference>
<dbReference type="AGR" id="HGNC:29618"/>
<dbReference type="CTD" id="57535"/>
<dbReference type="DisGeNET" id="57535"/>
<dbReference type="GeneCards" id="ELAPOR1"/>
<dbReference type="HGNC" id="HGNC:29618">
    <property type="gene designation" value="ELAPOR1"/>
</dbReference>
<dbReference type="HPA" id="ENSG00000116299">
    <property type="expression patterns" value="Tissue enhanced (pancreas, salivary gland, stomach)"/>
</dbReference>
<dbReference type="MIM" id="611298">
    <property type="type" value="gene"/>
</dbReference>
<dbReference type="neXtProt" id="NX_Q6UXG2"/>
<dbReference type="OpenTargets" id="ENSG00000116299"/>
<dbReference type="VEuPathDB" id="HostDB:ENSG00000116299"/>
<dbReference type="eggNOG" id="KOG1217">
    <property type="taxonomic scope" value="Eukaryota"/>
</dbReference>
<dbReference type="GeneTree" id="ENSGT00940000156861"/>
<dbReference type="HOGENOM" id="CLU_005066_0_0_1"/>
<dbReference type="InParanoid" id="Q6UXG2"/>
<dbReference type="OMA" id="NTAWEVA"/>
<dbReference type="OrthoDB" id="439917at2759"/>
<dbReference type="PAN-GO" id="Q6UXG2">
    <property type="GO annotations" value="6 GO annotations based on evolutionary models"/>
</dbReference>
<dbReference type="PhylomeDB" id="Q6UXG2"/>
<dbReference type="TreeFam" id="TF315906"/>
<dbReference type="PathwayCommons" id="Q6UXG2"/>
<dbReference type="SignaLink" id="Q6UXG2"/>
<dbReference type="BioGRID-ORCS" id="57535">
    <property type="hits" value="15 hits in 1151 CRISPR screens"/>
</dbReference>
<dbReference type="ChiTaRS" id="KIAA1324">
    <property type="organism name" value="human"/>
</dbReference>
<dbReference type="GenomeRNAi" id="57535"/>
<dbReference type="Pharos" id="Q6UXG2">
    <property type="development level" value="Tbio"/>
</dbReference>
<dbReference type="PRO" id="PR:Q6UXG2"/>
<dbReference type="Proteomes" id="UP000005640">
    <property type="component" value="Chromosome 1"/>
</dbReference>
<dbReference type="RNAct" id="Q6UXG2">
    <property type="molecule type" value="protein"/>
</dbReference>
<dbReference type="Bgee" id="ENSG00000116299">
    <property type="expression patterns" value="Expressed in parotid gland and 148 other cell types or tissues"/>
</dbReference>
<dbReference type="ExpressionAtlas" id="Q6UXG2">
    <property type="expression patterns" value="baseline and differential"/>
</dbReference>
<dbReference type="GO" id="GO:0005789">
    <property type="term" value="C:endoplasmic reticulum membrane"/>
    <property type="evidence" value="ECO:0007669"/>
    <property type="project" value="UniProtKB-SubCell"/>
</dbReference>
<dbReference type="GO" id="GO:0070062">
    <property type="term" value="C:extracellular exosome"/>
    <property type="evidence" value="ECO:0007005"/>
    <property type="project" value="UniProtKB"/>
</dbReference>
<dbReference type="GO" id="GO:0005794">
    <property type="term" value="C:Golgi apparatus"/>
    <property type="evidence" value="ECO:0007669"/>
    <property type="project" value="UniProtKB-SubCell"/>
</dbReference>
<dbReference type="GO" id="GO:0031902">
    <property type="term" value="C:late endosome membrane"/>
    <property type="evidence" value="ECO:0007669"/>
    <property type="project" value="UniProtKB-SubCell"/>
</dbReference>
<dbReference type="GO" id="GO:0005765">
    <property type="term" value="C:lysosomal membrane"/>
    <property type="evidence" value="ECO:0007669"/>
    <property type="project" value="UniProtKB-SubCell"/>
</dbReference>
<dbReference type="GO" id="GO:0005886">
    <property type="term" value="C:plasma membrane"/>
    <property type="evidence" value="ECO:0000314"/>
    <property type="project" value="BHF-UCL"/>
</dbReference>
<dbReference type="GO" id="GO:0003723">
    <property type="term" value="F:RNA binding"/>
    <property type="evidence" value="ECO:0007005"/>
    <property type="project" value="UniProtKB"/>
</dbReference>
<dbReference type="GO" id="GO:0000045">
    <property type="term" value="P:autophagosome assembly"/>
    <property type="evidence" value="ECO:0000315"/>
    <property type="project" value="BHF-UCL"/>
</dbReference>
<dbReference type="GO" id="GO:0009267">
    <property type="term" value="P:cellular response to starvation"/>
    <property type="evidence" value="ECO:0000315"/>
    <property type="project" value="BHF-UCL"/>
</dbReference>
<dbReference type="GO" id="GO:2000786">
    <property type="term" value="P:positive regulation of autophagosome assembly"/>
    <property type="evidence" value="ECO:0000315"/>
    <property type="project" value="BHF-UCL"/>
</dbReference>
<dbReference type="GO" id="GO:0044090">
    <property type="term" value="P:positive regulation of vacuole organization"/>
    <property type="evidence" value="ECO:0000315"/>
    <property type="project" value="BHF-UCL"/>
</dbReference>
<dbReference type="FunFam" id="2.10.50.10:FF:000054">
    <property type="entry name" value="UPF0577 protein KIAA1324 homolog"/>
    <property type="match status" value="1"/>
</dbReference>
<dbReference type="Gene3D" id="2.10.50.10">
    <property type="entry name" value="Tumor Necrosis Factor Receptor, subunit A, domain 2"/>
    <property type="match status" value="1"/>
</dbReference>
<dbReference type="InterPro" id="IPR056609">
    <property type="entry name" value="Elapor1-like_3rd"/>
</dbReference>
<dbReference type="InterPro" id="IPR039181">
    <property type="entry name" value="Elapor1/2"/>
</dbReference>
<dbReference type="InterPro" id="IPR056606">
    <property type="entry name" value="Elapor1/2_C"/>
</dbReference>
<dbReference type="InterPro" id="IPR056608">
    <property type="entry name" value="Elapor1/2_GBD"/>
</dbReference>
<dbReference type="InterPro" id="IPR056607">
    <property type="entry name" value="Elapor1/2_MRH"/>
</dbReference>
<dbReference type="InterPro" id="IPR056610">
    <property type="entry name" value="Elapor1/2_TNFR-like"/>
</dbReference>
<dbReference type="InterPro" id="IPR009030">
    <property type="entry name" value="Growth_fac_rcpt_cys_sf"/>
</dbReference>
<dbReference type="InterPro" id="IPR009011">
    <property type="entry name" value="Man6P_isomerase_rcpt-bd_dom_sf"/>
</dbReference>
<dbReference type="InterPro" id="IPR044865">
    <property type="entry name" value="MRH_dom"/>
</dbReference>
<dbReference type="PANTHER" id="PTHR22727:SF13">
    <property type="entry name" value="ENDOSOME_LYSOSOME-ASSOCIATED APOPTOSIS AND AUTOPHAGY REGULATOR 1"/>
    <property type="match status" value="1"/>
</dbReference>
<dbReference type="PANTHER" id="PTHR22727">
    <property type="entry name" value="PROTEIN CBG13728"/>
    <property type="match status" value="1"/>
</dbReference>
<dbReference type="Pfam" id="PF23089">
    <property type="entry name" value="ELAPOR1_C"/>
    <property type="match status" value="1"/>
</dbReference>
<dbReference type="Pfam" id="PF23031">
    <property type="entry name" value="GBD_ELAPOR1"/>
    <property type="match status" value="1"/>
</dbReference>
<dbReference type="Pfam" id="PF23032">
    <property type="entry name" value="GBD_ELAPOR1-like_3rd"/>
    <property type="match status" value="1"/>
</dbReference>
<dbReference type="Pfam" id="PF23087">
    <property type="entry name" value="MRH_ELAPOR1_9th"/>
    <property type="match status" value="1"/>
</dbReference>
<dbReference type="Pfam" id="PF23091">
    <property type="entry name" value="TNFR_ELAPOR1_6th"/>
    <property type="match status" value="1"/>
</dbReference>
<dbReference type="SMART" id="SM01411">
    <property type="entry name" value="Ephrin_rec_like"/>
    <property type="match status" value="4"/>
</dbReference>
<dbReference type="SUPFAM" id="SSF57184">
    <property type="entry name" value="Growth factor receptor domain"/>
    <property type="match status" value="2"/>
</dbReference>
<dbReference type="SUPFAM" id="SSF50911">
    <property type="entry name" value="Mannose 6-phosphate receptor domain"/>
    <property type="match status" value="1"/>
</dbReference>
<dbReference type="PROSITE" id="PS51914">
    <property type="entry name" value="MRH"/>
    <property type="match status" value="1"/>
</dbReference>
<feature type="signal peptide" evidence="2">
    <location>
        <begin position="1"/>
        <end position="41"/>
    </location>
</feature>
<feature type="chain" id="PRO_0000286600" description="Endosome/lysosome-associated apoptosis and autophagy regulator 1">
    <location>
        <begin position="42"/>
        <end position="1013"/>
    </location>
</feature>
<feature type="topological domain" description="Extracellular" evidence="2">
    <location>
        <begin position="42"/>
        <end position="910"/>
    </location>
</feature>
<feature type="transmembrane region" description="Helical" evidence="2">
    <location>
        <begin position="911"/>
        <end position="931"/>
    </location>
</feature>
<feature type="topological domain" description="Cytoplasmic" evidence="2">
    <location>
        <begin position="932"/>
        <end position="1013"/>
    </location>
</feature>
<feature type="domain" description="MRH" evidence="3">
    <location>
        <begin position="656"/>
        <end position="858"/>
    </location>
</feature>
<feature type="glycosylation site" description="N-linked (GlcNAc...) asparagine" evidence="2">
    <location>
        <position position="153"/>
    </location>
</feature>
<feature type="glycosylation site" description="N-linked (GlcNAc...) asparagine" evidence="2">
    <location>
        <position position="404"/>
    </location>
</feature>
<feature type="glycosylation site" description="N-linked (GlcNAc...) asparagine" evidence="2">
    <location>
        <position position="672"/>
    </location>
</feature>
<feature type="disulfide bond" evidence="1">
    <location>
        <begin position="278"/>
        <end position="295"/>
    </location>
</feature>
<feature type="disulfide bond" evidence="1">
    <location>
        <begin position="308"/>
        <end position="330"/>
    </location>
</feature>
<feature type="disulfide bond" evidence="1">
    <location>
        <begin position="311"/>
        <end position="342"/>
    </location>
</feature>
<feature type="disulfide bond" evidence="3">
    <location>
        <begin position="658"/>
        <end position="704"/>
    </location>
</feature>
<feature type="disulfide bond" evidence="3">
    <location>
        <begin position="714"/>
        <end position="739"/>
    </location>
</feature>
<feature type="disulfide bond" evidence="3">
    <location>
        <begin position="808"/>
        <end position="844"/>
    </location>
</feature>
<feature type="disulfide bond" evidence="3">
    <location>
        <begin position="820"/>
        <end position="856"/>
    </location>
</feature>
<feature type="splice variant" id="VSP_025115" description="In isoform 3." evidence="13">
    <location>
        <begin position="261"/>
        <end position="347"/>
    </location>
</feature>
<feature type="splice variant" id="VSP_025116" description="In isoform 2." evidence="12">
    <original>RTPDGFDSVPLKTSSGGLDMDL</original>
    <variation>FKDS</variation>
    <location>
        <begin position="992"/>
        <end position="1013"/>
    </location>
</feature>
<feature type="splice variant" id="VSP_025117" description="In isoform 4." evidence="11">
    <original>RTPDGFDSVPLKTSSGGLDMDL</original>
    <variation>QPAPVTISLSEDS</variation>
    <location>
        <begin position="992"/>
        <end position="1013"/>
    </location>
</feature>
<feature type="sequence variant" id="VAR_032138" description="In dbSNP:rs678238." evidence="5 6">
    <original>I</original>
    <variation>V</variation>
    <location>
        <position position="86"/>
    </location>
</feature>
<feature type="sequence variant" id="VAR_032139" description="In dbSNP:rs659543." evidence="4 5 6">
    <original>T</original>
    <variation>P</variation>
    <location>
        <position position="623"/>
    </location>
</feature>
<feature type="sequence variant" id="VAR_035751" description="In a breast cancer sample; somatic mutation." evidence="8">
    <original>S</original>
    <variation>R</variation>
    <location>
        <position position="829"/>
    </location>
</feature>
<feature type="sequence variant" id="VAR_032140" description="In dbSNP:rs1052878." evidence="6">
    <original>L</original>
    <variation>P</variation>
    <location>
        <position position="1009"/>
    </location>
</feature>
<feature type="sequence conflict" description="In Ref. 3; AAI25209." evidence="15" ref="3">
    <original>N</original>
    <variation>K</variation>
    <location>
        <position position="239"/>
    </location>
</feature>
<organism>
    <name type="scientific">Homo sapiens</name>
    <name type="common">Human</name>
    <dbReference type="NCBI Taxonomy" id="9606"/>
    <lineage>
        <taxon>Eukaryota</taxon>
        <taxon>Metazoa</taxon>
        <taxon>Chordata</taxon>
        <taxon>Craniata</taxon>
        <taxon>Vertebrata</taxon>
        <taxon>Euteleostomi</taxon>
        <taxon>Mammalia</taxon>
        <taxon>Eutheria</taxon>
        <taxon>Euarchontoglires</taxon>
        <taxon>Primates</taxon>
        <taxon>Haplorrhini</taxon>
        <taxon>Catarrhini</taxon>
        <taxon>Hominidae</taxon>
        <taxon>Homo</taxon>
    </lineage>
</organism>
<name>ELAP1_HUMAN</name>
<accession>Q6UXG2</accession>
<accession>Q08AE6</accession>
<accession>Q5T5C9</accession>
<accession>Q5T5D0</accession>
<accession>Q5T5D1</accession>
<accession>Q9P2M2</accession>
<protein>
    <recommendedName>
        <fullName evidence="15">Endosome/lysosome-associated apoptosis and autophagy regulator 1</fullName>
    </recommendedName>
    <alternativeName>
        <fullName evidence="14">Estrogen-induced gene 121 protein</fullName>
    </alternativeName>
</protein>
<proteinExistence type="evidence at protein level"/>